<organism>
    <name type="scientific">Escherichia coli O8 (strain IAI1)</name>
    <dbReference type="NCBI Taxonomy" id="585034"/>
    <lineage>
        <taxon>Bacteria</taxon>
        <taxon>Pseudomonadati</taxon>
        <taxon>Pseudomonadota</taxon>
        <taxon>Gammaproteobacteria</taxon>
        <taxon>Enterobacterales</taxon>
        <taxon>Enterobacteriaceae</taxon>
        <taxon>Escherichia</taxon>
    </lineage>
</organism>
<name>NANA_ECO8A</name>
<feature type="chain" id="PRO_1000139733" description="N-acetylneuraminate lyase">
    <location>
        <begin position="1"/>
        <end position="297"/>
    </location>
</feature>
<feature type="active site" description="Proton donor" evidence="1">
    <location>
        <position position="137"/>
    </location>
</feature>
<feature type="active site" description="Schiff-base intermediate with substrate" evidence="1">
    <location>
        <position position="165"/>
    </location>
</feature>
<feature type="binding site" evidence="1">
    <location>
        <position position="47"/>
    </location>
    <ligand>
        <name>aceneuramate</name>
        <dbReference type="ChEBI" id="CHEBI:173083"/>
    </ligand>
</feature>
<feature type="binding site" evidence="1">
    <location>
        <position position="48"/>
    </location>
    <ligand>
        <name>aceneuramate</name>
        <dbReference type="ChEBI" id="CHEBI:173083"/>
    </ligand>
</feature>
<feature type="binding site" evidence="1">
    <location>
        <position position="167"/>
    </location>
    <ligand>
        <name>aceneuramate</name>
        <dbReference type="ChEBI" id="CHEBI:173083"/>
    </ligand>
</feature>
<feature type="binding site" evidence="1">
    <location>
        <position position="189"/>
    </location>
    <ligand>
        <name>aceneuramate</name>
        <dbReference type="ChEBI" id="CHEBI:173083"/>
    </ligand>
</feature>
<feature type="binding site" evidence="1">
    <location>
        <position position="191"/>
    </location>
    <ligand>
        <name>aceneuramate</name>
        <dbReference type="ChEBI" id="CHEBI:173083"/>
    </ligand>
</feature>
<feature type="binding site" evidence="1">
    <location>
        <position position="192"/>
    </location>
    <ligand>
        <name>aceneuramate</name>
        <dbReference type="ChEBI" id="CHEBI:173083"/>
    </ligand>
</feature>
<feature type="binding site" evidence="1">
    <location>
        <position position="208"/>
    </location>
    <ligand>
        <name>aceneuramate</name>
        <dbReference type="ChEBI" id="CHEBI:173083"/>
    </ligand>
</feature>
<accession>B7M0T7</accession>
<sequence length="297" mass="32593">MATNLRGVMAALLTPFDQQQALDKASLRRLVQFNIQQGIDGLYVGGSTGEAFVQSLSEREQVLEIVAEEAKGKIKLIAHVGCVSTAESQQLAASAKRYGFDAVSAVTPFYYPFSFEEHCDHYRAIIDSADGLPMVVYNIPALSGVKLTLDQINTLVTLPGVGALKQTSGDLYQMEQIRREHPDLVLYNGYDEIFASGLLAGADGGIGSTYNIMGWRYQGIVKALKEGDIQTAQKLQTECNKVIDLLIKTGVFRGLKTVLHYMDVVSVPLCRKPFGPVDEKYLPELKALAQQLMQERG</sequence>
<proteinExistence type="inferred from homology"/>
<evidence type="ECO:0000255" key="1">
    <source>
        <dbReference type="HAMAP-Rule" id="MF_01237"/>
    </source>
</evidence>
<reference key="1">
    <citation type="journal article" date="2009" name="PLoS Genet.">
        <title>Organised genome dynamics in the Escherichia coli species results in highly diverse adaptive paths.</title>
        <authorList>
            <person name="Touchon M."/>
            <person name="Hoede C."/>
            <person name="Tenaillon O."/>
            <person name="Barbe V."/>
            <person name="Baeriswyl S."/>
            <person name="Bidet P."/>
            <person name="Bingen E."/>
            <person name="Bonacorsi S."/>
            <person name="Bouchier C."/>
            <person name="Bouvet O."/>
            <person name="Calteau A."/>
            <person name="Chiapello H."/>
            <person name="Clermont O."/>
            <person name="Cruveiller S."/>
            <person name="Danchin A."/>
            <person name="Diard M."/>
            <person name="Dossat C."/>
            <person name="Karoui M.E."/>
            <person name="Frapy E."/>
            <person name="Garry L."/>
            <person name="Ghigo J.M."/>
            <person name="Gilles A.M."/>
            <person name="Johnson J."/>
            <person name="Le Bouguenec C."/>
            <person name="Lescat M."/>
            <person name="Mangenot S."/>
            <person name="Martinez-Jehanne V."/>
            <person name="Matic I."/>
            <person name="Nassif X."/>
            <person name="Oztas S."/>
            <person name="Petit M.A."/>
            <person name="Pichon C."/>
            <person name="Rouy Z."/>
            <person name="Ruf C.S."/>
            <person name="Schneider D."/>
            <person name="Tourret J."/>
            <person name="Vacherie B."/>
            <person name="Vallenet D."/>
            <person name="Medigue C."/>
            <person name="Rocha E.P.C."/>
            <person name="Denamur E."/>
        </authorList>
    </citation>
    <scope>NUCLEOTIDE SEQUENCE [LARGE SCALE GENOMIC DNA]</scope>
    <source>
        <strain>IAI1</strain>
    </source>
</reference>
<protein>
    <recommendedName>
        <fullName evidence="1">N-acetylneuraminate lyase</fullName>
        <shortName evidence="1">NAL</shortName>
        <shortName evidence="1">Neu5Ac lyase</shortName>
        <ecNumber evidence="1">4.1.3.3</ecNumber>
    </recommendedName>
    <alternativeName>
        <fullName evidence="1">N-acetylneuraminate pyruvate-lyase</fullName>
    </alternativeName>
    <alternativeName>
        <fullName evidence="1">N-acetylneuraminic acid aldolase</fullName>
    </alternativeName>
    <alternativeName>
        <fullName evidence="1">Sialate lyase</fullName>
    </alternativeName>
    <alternativeName>
        <fullName evidence="1">Sialic acid aldolase</fullName>
    </alternativeName>
    <alternativeName>
        <fullName evidence="1">Sialic acid lyase</fullName>
    </alternativeName>
</protein>
<comment type="function">
    <text evidence="1">Catalyzes the reversible aldol cleavage of N-acetylneuraminic acid (sialic acid; Neu5Ac) to form pyruvate and N-acetylmannosamine (ManNAc) via a Schiff base intermediate.</text>
</comment>
<comment type="catalytic activity">
    <reaction evidence="1">
        <text>aceneuramate = aldehydo-N-acetyl-D-mannosamine + pyruvate</text>
        <dbReference type="Rhea" id="RHEA:23296"/>
        <dbReference type="ChEBI" id="CHEBI:15361"/>
        <dbReference type="ChEBI" id="CHEBI:17122"/>
        <dbReference type="ChEBI" id="CHEBI:173083"/>
        <dbReference type="EC" id="4.1.3.3"/>
    </reaction>
</comment>
<comment type="pathway">
    <text evidence="1">Amino-sugar metabolism; N-acetylneuraminate degradation; D-fructose 6-phosphate from N-acetylneuraminate: step 1/5.</text>
</comment>
<comment type="subunit">
    <text evidence="1">Homotetramer.</text>
</comment>
<comment type="subcellular location">
    <subcellularLocation>
        <location evidence="1">Cytoplasm</location>
    </subcellularLocation>
</comment>
<comment type="similarity">
    <text evidence="1">Belongs to the DapA family. NanA subfamily.</text>
</comment>
<keyword id="KW-0119">Carbohydrate metabolism</keyword>
<keyword id="KW-0963">Cytoplasm</keyword>
<keyword id="KW-0456">Lyase</keyword>
<keyword id="KW-0704">Schiff base</keyword>
<gene>
    <name evidence="1" type="primary">nanA</name>
    <name type="ordered locus">ECIAI1_3367</name>
</gene>
<dbReference type="EC" id="4.1.3.3" evidence="1"/>
<dbReference type="EMBL" id="CU928160">
    <property type="protein sequence ID" value="CAR00181.1"/>
    <property type="molecule type" value="Genomic_DNA"/>
</dbReference>
<dbReference type="RefSeq" id="WP_000224714.1">
    <property type="nucleotide sequence ID" value="NC_011741.1"/>
</dbReference>
<dbReference type="SMR" id="B7M0T7"/>
<dbReference type="GeneID" id="93778761"/>
<dbReference type="KEGG" id="ecr:ECIAI1_3367"/>
<dbReference type="HOGENOM" id="CLU_049343_6_0_6"/>
<dbReference type="UniPathway" id="UPA00629">
    <property type="reaction ID" value="UER00680"/>
</dbReference>
<dbReference type="GO" id="GO:0005829">
    <property type="term" value="C:cytosol"/>
    <property type="evidence" value="ECO:0007669"/>
    <property type="project" value="TreeGrafter"/>
</dbReference>
<dbReference type="GO" id="GO:0008747">
    <property type="term" value="F:N-acetylneuraminate lyase activity"/>
    <property type="evidence" value="ECO:0007669"/>
    <property type="project" value="UniProtKB-UniRule"/>
</dbReference>
<dbReference type="GO" id="GO:0005975">
    <property type="term" value="P:carbohydrate metabolic process"/>
    <property type="evidence" value="ECO:0007669"/>
    <property type="project" value="UniProtKB-UniRule"/>
</dbReference>
<dbReference type="GO" id="GO:0019262">
    <property type="term" value="P:N-acetylneuraminate catabolic process"/>
    <property type="evidence" value="ECO:0007669"/>
    <property type="project" value="UniProtKB-UniRule"/>
</dbReference>
<dbReference type="CDD" id="cd00954">
    <property type="entry name" value="NAL"/>
    <property type="match status" value="1"/>
</dbReference>
<dbReference type="FunFam" id="3.20.20.70:FF:000039">
    <property type="entry name" value="N-acetylneuraminate lyase"/>
    <property type="match status" value="1"/>
</dbReference>
<dbReference type="Gene3D" id="3.20.20.70">
    <property type="entry name" value="Aldolase class I"/>
    <property type="match status" value="1"/>
</dbReference>
<dbReference type="HAMAP" id="MF_01237">
    <property type="entry name" value="N_acetylneuram_lyase"/>
    <property type="match status" value="1"/>
</dbReference>
<dbReference type="InterPro" id="IPR013785">
    <property type="entry name" value="Aldolase_TIM"/>
</dbReference>
<dbReference type="InterPro" id="IPR002220">
    <property type="entry name" value="DapA-like"/>
</dbReference>
<dbReference type="InterPro" id="IPR005264">
    <property type="entry name" value="NanA"/>
</dbReference>
<dbReference type="InterPro" id="IPR020625">
    <property type="entry name" value="Schiff_base-form_aldolases_AS"/>
</dbReference>
<dbReference type="InterPro" id="IPR020624">
    <property type="entry name" value="Schiff_base-form_aldolases_CS"/>
</dbReference>
<dbReference type="NCBIfam" id="TIGR00683">
    <property type="entry name" value="nanA"/>
    <property type="match status" value="1"/>
</dbReference>
<dbReference type="NCBIfam" id="NF003164">
    <property type="entry name" value="PRK04147.1"/>
    <property type="match status" value="1"/>
</dbReference>
<dbReference type="PANTHER" id="PTHR42849">
    <property type="entry name" value="N-ACETYLNEURAMINATE LYASE"/>
    <property type="match status" value="1"/>
</dbReference>
<dbReference type="PANTHER" id="PTHR42849:SF1">
    <property type="entry name" value="N-ACETYLNEURAMINATE LYASE"/>
    <property type="match status" value="1"/>
</dbReference>
<dbReference type="Pfam" id="PF00701">
    <property type="entry name" value="DHDPS"/>
    <property type="match status" value="1"/>
</dbReference>
<dbReference type="PIRSF" id="PIRSF001365">
    <property type="entry name" value="DHDPS"/>
    <property type="match status" value="1"/>
</dbReference>
<dbReference type="PRINTS" id="PR00146">
    <property type="entry name" value="DHPICSNTHASE"/>
</dbReference>
<dbReference type="SMART" id="SM01130">
    <property type="entry name" value="DHDPS"/>
    <property type="match status" value="1"/>
</dbReference>
<dbReference type="SUPFAM" id="SSF51569">
    <property type="entry name" value="Aldolase"/>
    <property type="match status" value="1"/>
</dbReference>
<dbReference type="PROSITE" id="PS00665">
    <property type="entry name" value="DHDPS_1"/>
    <property type="match status" value="1"/>
</dbReference>
<dbReference type="PROSITE" id="PS00666">
    <property type="entry name" value="DHDPS_2"/>
    <property type="match status" value="1"/>
</dbReference>